<evidence type="ECO:0000255" key="1">
    <source>
        <dbReference type="HAMAP-Rule" id="MF_01369"/>
    </source>
</evidence>
<evidence type="ECO:0000305" key="2"/>
<gene>
    <name evidence="1" type="primary">rplW</name>
    <name type="ordered locus">PsycPRwf_0428</name>
</gene>
<keyword id="KW-0687">Ribonucleoprotein</keyword>
<keyword id="KW-0689">Ribosomal protein</keyword>
<keyword id="KW-0694">RNA-binding</keyword>
<keyword id="KW-0699">rRNA-binding</keyword>
<comment type="function">
    <text evidence="1">One of the early assembly proteins it binds 23S rRNA. One of the proteins that surrounds the polypeptide exit tunnel on the outside of the ribosome. Forms the main docking site for trigger factor binding to the ribosome.</text>
</comment>
<comment type="subunit">
    <text evidence="1">Part of the 50S ribosomal subunit. Contacts protein L29, and trigger factor when it is bound to the ribosome.</text>
</comment>
<comment type="similarity">
    <text evidence="1">Belongs to the universal ribosomal protein uL23 family.</text>
</comment>
<name>RL23_PSYWF</name>
<organism>
    <name type="scientific">Psychrobacter sp. (strain PRwf-1)</name>
    <dbReference type="NCBI Taxonomy" id="349106"/>
    <lineage>
        <taxon>Bacteria</taxon>
        <taxon>Pseudomonadati</taxon>
        <taxon>Pseudomonadota</taxon>
        <taxon>Gammaproteobacteria</taxon>
        <taxon>Moraxellales</taxon>
        <taxon>Moraxellaceae</taxon>
        <taxon>Psychrobacter</taxon>
    </lineage>
</organism>
<dbReference type="EMBL" id="CP000713">
    <property type="protein sequence ID" value="ABQ93383.1"/>
    <property type="molecule type" value="Genomic_DNA"/>
</dbReference>
<dbReference type="SMR" id="A5WCJ2"/>
<dbReference type="STRING" id="349106.PsycPRwf_0428"/>
<dbReference type="KEGG" id="prw:PsycPRwf_0428"/>
<dbReference type="eggNOG" id="COG0089">
    <property type="taxonomic scope" value="Bacteria"/>
</dbReference>
<dbReference type="HOGENOM" id="CLU_037562_3_1_6"/>
<dbReference type="GO" id="GO:1990904">
    <property type="term" value="C:ribonucleoprotein complex"/>
    <property type="evidence" value="ECO:0007669"/>
    <property type="project" value="UniProtKB-KW"/>
</dbReference>
<dbReference type="GO" id="GO:0005840">
    <property type="term" value="C:ribosome"/>
    <property type="evidence" value="ECO:0007669"/>
    <property type="project" value="UniProtKB-KW"/>
</dbReference>
<dbReference type="GO" id="GO:0019843">
    <property type="term" value="F:rRNA binding"/>
    <property type="evidence" value="ECO:0007669"/>
    <property type="project" value="UniProtKB-UniRule"/>
</dbReference>
<dbReference type="GO" id="GO:0003735">
    <property type="term" value="F:structural constituent of ribosome"/>
    <property type="evidence" value="ECO:0007669"/>
    <property type="project" value="InterPro"/>
</dbReference>
<dbReference type="GO" id="GO:0006412">
    <property type="term" value="P:translation"/>
    <property type="evidence" value="ECO:0007669"/>
    <property type="project" value="UniProtKB-UniRule"/>
</dbReference>
<dbReference type="FunFam" id="3.30.70.330:FF:000001">
    <property type="entry name" value="50S ribosomal protein L23"/>
    <property type="match status" value="1"/>
</dbReference>
<dbReference type="Gene3D" id="3.30.70.330">
    <property type="match status" value="1"/>
</dbReference>
<dbReference type="HAMAP" id="MF_01369_B">
    <property type="entry name" value="Ribosomal_uL23_B"/>
    <property type="match status" value="1"/>
</dbReference>
<dbReference type="InterPro" id="IPR012677">
    <property type="entry name" value="Nucleotide-bd_a/b_plait_sf"/>
</dbReference>
<dbReference type="InterPro" id="IPR013025">
    <property type="entry name" value="Ribosomal_uL23-like"/>
</dbReference>
<dbReference type="InterPro" id="IPR012678">
    <property type="entry name" value="Ribosomal_uL23/eL15/eS24_sf"/>
</dbReference>
<dbReference type="NCBIfam" id="NF004359">
    <property type="entry name" value="PRK05738.1-3"/>
    <property type="match status" value="1"/>
</dbReference>
<dbReference type="NCBIfam" id="NF004363">
    <property type="entry name" value="PRK05738.2-4"/>
    <property type="match status" value="1"/>
</dbReference>
<dbReference type="PANTHER" id="PTHR11620">
    <property type="entry name" value="60S RIBOSOMAL PROTEIN L23A"/>
    <property type="match status" value="1"/>
</dbReference>
<dbReference type="Pfam" id="PF00276">
    <property type="entry name" value="Ribosomal_L23"/>
    <property type="match status" value="1"/>
</dbReference>
<dbReference type="SUPFAM" id="SSF54189">
    <property type="entry name" value="Ribosomal proteins S24e, L23 and L15e"/>
    <property type="match status" value="1"/>
</dbReference>
<feature type="chain" id="PRO_1000073445" description="Large ribosomal subunit protein uL23">
    <location>
        <begin position="1"/>
        <end position="116"/>
    </location>
</feature>
<reference key="1">
    <citation type="submission" date="2007-05" db="EMBL/GenBank/DDBJ databases">
        <title>Complete sequence of chromosome of Psychrobacter sp. PRwf-1.</title>
        <authorList>
            <consortium name="US DOE Joint Genome Institute"/>
            <person name="Copeland A."/>
            <person name="Lucas S."/>
            <person name="Lapidus A."/>
            <person name="Barry K."/>
            <person name="Detter J.C."/>
            <person name="Glavina del Rio T."/>
            <person name="Hammon N."/>
            <person name="Israni S."/>
            <person name="Dalin E."/>
            <person name="Tice H."/>
            <person name="Pitluck S."/>
            <person name="Chain P."/>
            <person name="Malfatti S."/>
            <person name="Shin M."/>
            <person name="Vergez L."/>
            <person name="Schmutz J."/>
            <person name="Larimer F."/>
            <person name="Land M."/>
            <person name="Hauser L."/>
            <person name="Kyrpides N."/>
            <person name="Kim E."/>
            <person name="Tiedje J."/>
            <person name="Richardson P."/>
        </authorList>
    </citation>
    <scope>NUCLEOTIDE SEQUENCE [LARGE SCALE GENOMIC DNA]</scope>
    <source>
        <strain>PRwf-1</strain>
    </source>
</reference>
<sequence>MNNARLYQVLKGPVFSEKSQLLGDSLGVQVFKVDNNATKREIKKAVELMFEGVEVTKVNTLNVKGKTKRFGRTVGRRNDYKKAYVTLKAGQDVQMADAGEEIADNAASTSETANNE</sequence>
<proteinExistence type="inferred from homology"/>
<protein>
    <recommendedName>
        <fullName evidence="1">Large ribosomal subunit protein uL23</fullName>
    </recommendedName>
    <alternativeName>
        <fullName evidence="2">50S ribosomal protein L23</fullName>
    </alternativeName>
</protein>
<accession>A5WCJ2</accession>